<organism>
    <name type="scientific">Shigella dysenteriae serotype 1 (strain Sd197)</name>
    <dbReference type="NCBI Taxonomy" id="300267"/>
    <lineage>
        <taxon>Bacteria</taxon>
        <taxon>Pseudomonadati</taxon>
        <taxon>Pseudomonadota</taxon>
        <taxon>Gammaproteobacteria</taxon>
        <taxon>Enterobacterales</taxon>
        <taxon>Enterobacteriaceae</taxon>
        <taxon>Shigella</taxon>
    </lineage>
</organism>
<protein>
    <recommendedName>
        <fullName evidence="1">Chromosomal replication initiator protein DnaA</fullName>
    </recommendedName>
</protein>
<feature type="chain" id="PRO_1000048727" description="Chromosomal replication initiator protein DnaA">
    <location>
        <begin position="1"/>
        <end position="467"/>
    </location>
</feature>
<feature type="region of interest" description="Domain I, interacts with DnaA modulators" evidence="1">
    <location>
        <begin position="1"/>
        <end position="90"/>
    </location>
</feature>
<feature type="region of interest" description="Domain II" evidence="1">
    <location>
        <begin position="91"/>
        <end position="130"/>
    </location>
</feature>
<feature type="region of interest" description="Domain III, AAA+ region" evidence="1">
    <location>
        <begin position="131"/>
        <end position="347"/>
    </location>
</feature>
<feature type="region of interest" description="Domain IV, binds dsDNA" evidence="1">
    <location>
        <begin position="348"/>
        <end position="467"/>
    </location>
</feature>
<feature type="binding site" evidence="1">
    <location>
        <position position="175"/>
    </location>
    <ligand>
        <name>ATP</name>
        <dbReference type="ChEBI" id="CHEBI:30616"/>
    </ligand>
</feature>
<feature type="binding site" evidence="1">
    <location>
        <position position="177"/>
    </location>
    <ligand>
        <name>ATP</name>
        <dbReference type="ChEBI" id="CHEBI:30616"/>
    </ligand>
</feature>
<feature type="binding site" evidence="1">
    <location>
        <position position="178"/>
    </location>
    <ligand>
        <name>ATP</name>
        <dbReference type="ChEBI" id="CHEBI:30616"/>
    </ligand>
</feature>
<feature type="binding site" evidence="1">
    <location>
        <position position="179"/>
    </location>
    <ligand>
        <name>ATP</name>
        <dbReference type="ChEBI" id="CHEBI:30616"/>
    </ligand>
</feature>
<reference key="1">
    <citation type="journal article" date="2005" name="Nucleic Acids Res.">
        <title>Genome dynamics and diversity of Shigella species, the etiologic agents of bacillary dysentery.</title>
        <authorList>
            <person name="Yang F."/>
            <person name="Yang J."/>
            <person name="Zhang X."/>
            <person name="Chen L."/>
            <person name="Jiang Y."/>
            <person name="Yan Y."/>
            <person name="Tang X."/>
            <person name="Wang J."/>
            <person name="Xiong Z."/>
            <person name="Dong J."/>
            <person name="Xue Y."/>
            <person name="Zhu Y."/>
            <person name="Xu X."/>
            <person name="Sun L."/>
            <person name="Chen S."/>
            <person name="Nie H."/>
            <person name="Peng J."/>
            <person name="Xu J."/>
            <person name="Wang Y."/>
            <person name="Yuan Z."/>
            <person name="Wen Y."/>
            <person name="Yao Z."/>
            <person name="Shen Y."/>
            <person name="Qiang B."/>
            <person name="Hou Y."/>
            <person name="Yu J."/>
            <person name="Jin Q."/>
        </authorList>
    </citation>
    <scope>NUCLEOTIDE SEQUENCE [LARGE SCALE GENOMIC DNA]</scope>
    <source>
        <strain>Sd197</strain>
    </source>
</reference>
<name>DNAA_SHIDS</name>
<dbReference type="EMBL" id="CP000034">
    <property type="protein sequence ID" value="ABB64089.1"/>
    <property type="molecule type" value="Genomic_DNA"/>
</dbReference>
<dbReference type="RefSeq" id="WP_000059101.1">
    <property type="nucleotide sequence ID" value="NC_007606.1"/>
</dbReference>
<dbReference type="RefSeq" id="YP_405580.1">
    <property type="nucleotide sequence ID" value="NC_007606.1"/>
</dbReference>
<dbReference type="SMR" id="Q329B6"/>
<dbReference type="STRING" id="300267.SDY_4184"/>
<dbReference type="EnsemblBacteria" id="ABB64089">
    <property type="protein sequence ID" value="ABB64089"/>
    <property type="gene ID" value="SDY_4184"/>
</dbReference>
<dbReference type="KEGG" id="sdy:SDY_4184"/>
<dbReference type="PATRIC" id="fig|300267.13.peg.4922"/>
<dbReference type="HOGENOM" id="CLU_026910_0_1_6"/>
<dbReference type="Proteomes" id="UP000002716">
    <property type="component" value="Chromosome"/>
</dbReference>
<dbReference type="GO" id="GO:0005737">
    <property type="term" value="C:cytoplasm"/>
    <property type="evidence" value="ECO:0007669"/>
    <property type="project" value="UniProtKB-SubCell"/>
</dbReference>
<dbReference type="GO" id="GO:0005886">
    <property type="term" value="C:plasma membrane"/>
    <property type="evidence" value="ECO:0007669"/>
    <property type="project" value="TreeGrafter"/>
</dbReference>
<dbReference type="GO" id="GO:0005524">
    <property type="term" value="F:ATP binding"/>
    <property type="evidence" value="ECO:0007669"/>
    <property type="project" value="UniProtKB-UniRule"/>
</dbReference>
<dbReference type="GO" id="GO:0016887">
    <property type="term" value="F:ATP hydrolysis activity"/>
    <property type="evidence" value="ECO:0007669"/>
    <property type="project" value="InterPro"/>
</dbReference>
<dbReference type="GO" id="GO:0003688">
    <property type="term" value="F:DNA replication origin binding"/>
    <property type="evidence" value="ECO:0007669"/>
    <property type="project" value="UniProtKB-UniRule"/>
</dbReference>
<dbReference type="GO" id="GO:0008289">
    <property type="term" value="F:lipid binding"/>
    <property type="evidence" value="ECO:0007669"/>
    <property type="project" value="UniProtKB-KW"/>
</dbReference>
<dbReference type="GO" id="GO:0006270">
    <property type="term" value="P:DNA replication initiation"/>
    <property type="evidence" value="ECO:0007669"/>
    <property type="project" value="UniProtKB-UniRule"/>
</dbReference>
<dbReference type="GO" id="GO:0006275">
    <property type="term" value="P:regulation of DNA replication"/>
    <property type="evidence" value="ECO:0007669"/>
    <property type="project" value="UniProtKB-UniRule"/>
</dbReference>
<dbReference type="CDD" id="cd00009">
    <property type="entry name" value="AAA"/>
    <property type="match status" value="1"/>
</dbReference>
<dbReference type="CDD" id="cd06571">
    <property type="entry name" value="Bac_DnaA_C"/>
    <property type="match status" value="1"/>
</dbReference>
<dbReference type="FunFam" id="1.10.1750.10:FF:000001">
    <property type="entry name" value="Chromosomal replication initiator protein DnaA"/>
    <property type="match status" value="1"/>
</dbReference>
<dbReference type="FunFam" id="1.10.8.60:FF:000003">
    <property type="entry name" value="Chromosomal replication initiator protein DnaA"/>
    <property type="match status" value="1"/>
</dbReference>
<dbReference type="FunFam" id="3.30.300.180:FF:000001">
    <property type="entry name" value="Chromosomal replication initiator protein DnaA"/>
    <property type="match status" value="1"/>
</dbReference>
<dbReference type="FunFam" id="3.40.50.300:FF:000103">
    <property type="entry name" value="Chromosomal replication initiator protein DnaA"/>
    <property type="match status" value="1"/>
</dbReference>
<dbReference type="Gene3D" id="1.10.1750.10">
    <property type="match status" value="1"/>
</dbReference>
<dbReference type="Gene3D" id="1.10.8.60">
    <property type="match status" value="1"/>
</dbReference>
<dbReference type="Gene3D" id="3.30.300.180">
    <property type="match status" value="1"/>
</dbReference>
<dbReference type="Gene3D" id="3.40.50.300">
    <property type="entry name" value="P-loop containing nucleotide triphosphate hydrolases"/>
    <property type="match status" value="1"/>
</dbReference>
<dbReference type="HAMAP" id="MF_00377">
    <property type="entry name" value="DnaA_bact"/>
    <property type="match status" value="1"/>
</dbReference>
<dbReference type="InterPro" id="IPR003593">
    <property type="entry name" value="AAA+_ATPase"/>
</dbReference>
<dbReference type="InterPro" id="IPR001957">
    <property type="entry name" value="Chromosome_initiator_DnaA"/>
</dbReference>
<dbReference type="InterPro" id="IPR020591">
    <property type="entry name" value="Chromosome_initiator_DnaA-like"/>
</dbReference>
<dbReference type="InterPro" id="IPR018312">
    <property type="entry name" value="Chromosome_initiator_DnaA_CS"/>
</dbReference>
<dbReference type="InterPro" id="IPR013159">
    <property type="entry name" value="DnaA_C"/>
</dbReference>
<dbReference type="InterPro" id="IPR013317">
    <property type="entry name" value="DnaA_dom"/>
</dbReference>
<dbReference type="InterPro" id="IPR024633">
    <property type="entry name" value="DnaA_N_dom"/>
</dbReference>
<dbReference type="InterPro" id="IPR038454">
    <property type="entry name" value="DnaA_N_sf"/>
</dbReference>
<dbReference type="InterPro" id="IPR027417">
    <property type="entry name" value="P-loop_NTPase"/>
</dbReference>
<dbReference type="InterPro" id="IPR010921">
    <property type="entry name" value="Trp_repressor/repl_initiator"/>
</dbReference>
<dbReference type="NCBIfam" id="TIGR00362">
    <property type="entry name" value="DnaA"/>
    <property type="match status" value="1"/>
</dbReference>
<dbReference type="PANTHER" id="PTHR30050">
    <property type="entry name" value="CHROMOSOMAL REPLICATION INITIATOR PROTEIN DNAA"/>
    <property type="match status" value="1"/>
</dbReference>
<dbReference type="PANTHER" id="PTHR30050:SF2">
    <property type="entry name" value="CHROMOSOMAL REPLICATION INITIATOR PROTEIN DNAA"/>
    <property type="match status" value="1"/>
</dbReference>
<dbReference type="Pfam" id="PF00308">
    <property type="entry name" value="Bac_DnaA"/>
    <property type="match status" value="1"/>
</dbReference>
<dbReference type="Pfam" id="PF08299">
    <property type="entry name" value="Bac_DnaA_C"/>
    <property type="match status" value="1"/>
</dbReference>
<dbReference type="Pfam" id="PF11638">
    <property type="entry name" value="DnaA_N"/>
    <property type="match status" value="1"/>
</dbReference>
<dbReference type="PRINTS" id="PR00051">
    <property type="entry name" value="DNAA"/>
</dbReference>
<dbReference type="SMART" id="SM00382">
    <property type="entry name" value="AAA"/>
    <property type="match status" value="1"/>
</dbReference>
<dbReference type="SMART" id="SM00760">
    <property type="entry name" value="Bac_DnaA_C"/>
    <property type="match status" value="1"/>
</dbReference>
<dbReference type="SUPFAM" id="SSF52540">
    <property type="entry name" value="P-loop containing nucleoside triphosphate hydrolases"/>
    <property type="match status" value="1"/>
</dbReference>
<dbReference type="SUPFAM" id="SSF48295">
    <property type="entry name" value="TrpR-like"/>
    <property type="match status" value="1"/>
</dbReference>
<dbReference type="PROSITE" id="PS01008">
    <property type="entry name" value="DNAA"/>
    <property type="match status" value="1"/>
</dbReference>
<evidence type="ECO:0000255" key="1">
    <source>
        <dbReference type="HAMAP-Rule" id="MF_00377"/>
    </source>
</evidence>
<comment type="function">
    <text evidence="1">Plays an essential role in the initiation and regulation of chromosomal replication. ATP-DnaA binds to the origin of replication (oriC) to initiate formation of the DNA replication initiation complex once per cell cycle. Binds the DnaA box (a 9 base pair repeat at the origin) and separates the double-stranded (ds)DNA. Forms a right-handed helical filament on oriC DNA; dsDNA binds to the exterior of the filament while single-stranded (ss)DNA is stabiized in the filament's interior. The ATP-DnaA-oriC complex binds and stabilizes one strand of the AT-rich DNA unwinding element (DUE), permitting loading of DNA polymerase. After initiation quickly degrades to an ADP-DnaA complex that is not apt for DNA replication. Binds acidic phospholipids.</text>
</comment>
<comment type="subunit">
    <text evidence="1">Oligomerizes as a right-handed, spiral filament on DNA at oriC.</text>
</comment>
<comment type="subcellular location">
    <subcellularLocation>
        <location evidence="1">Cytoplasm</location>
    </subcellularLocation>
</comment>
<comment type="domain">
    <text evidence="1">Domain I is involved in oligomerization and binding regulators, domain II is flexibile and of varying length in different bacteria, domain III forms the AAA+ region, while domain IV binds dsDNA.</text>
</comment>
<comment type="similarity">
    <text evidence="1">Belongs to the DnaA family.</text>
</comment>
<accession>Q329B6</accession>
<keyword id="KW-0067">ATP-binding</keyword>
<keyword id="KW-0963">Cytoplasm</keyword>
<keyword id="KW-0235">DNA replication</keyword>
<keyword id="KW-0238">DNA-binding</keyword>
<keyword id="KW-0446">Lipid-binding</keyword>
<keyword id="KW-0547">Nucleotide-binding</keyword>
<keyword id="KW-1185">Reference proteome</keyword>
<proteinExistence type="inferred from homology"/>
<gene>
    <name evidence="1" type="primary">dnaA</name>
    <name type="ordered locus">SDY_4184</name>
</gene>
<sequence length="467" mass="52536">MSLSLWQQCLARLQDELPATEFSMWIRPLQAELSDNTLALYAPNRFVLDWVRDKYLNNINGLLTSFCGADAPQLRFEVGTKPVTQTPQAAVTSNVAAPALVAQTQPQRAAPSTRSGWDNVPAPAEPTYRSNVNVKHTFDNFVEGKSNQLARAAARQVADNPGGAYNPLFLYGGTGLGKTHLLHAVGNGIMARKPNAKVVYMHSERFVQDMVKALQNNAIEEFKRYYRSVDALLIDDIQFFANKERSQEEFFHTFNALLEGNQQIILTSDRYPKEINGVEDRLKSRFGWGLTVAIEPPELETRVAILMKKADENDIRLPGEVAFFIAKRLRSNVRELEGALNRVIANANFTGRAITIDFVREALRDLLALQEKLVTIDNIQKTVAEYYKIKVADLLSKRRSRSVARPRQMAMALAKELTNHSLPEIGDAFGGRDHTTVLHACRKIEQLREESHDIKEDFSNLIRTLSS</sequence>